<keyword id="KW-0963">Cytoplasm</keyword>
<keyword id="KW-0251">Elongation factor</keyword>
<keyword id="KW-0342">GTP-binding</keyword>
<keyword id="KW-0378">Hydrolase</keyword>
<keyword id="KW-0460">Magnesium</keyword>
<keyword id="KW-0479">Metal-binding</keyword>
<keyword id="KW-0547">Nucleotide-binding</keyword>
<keyword id="KW-0648">Protein biosynthesis</keyword>
<comment type="function">
    <text evidence="2">GTP hydrolase that promotes the GTP-dependent binding of aminoacyl-tRNA to the A-site of ribosomes during protein biosynthesis.</text>
</comment>
<comment type="catalytic activity">
    <reaction evidence="2">
        <text>GTP + H2O = GDP + phosphate + H(+)</text>
        <dbReference type="Rhea" id="RHEA:19669"/>
        <dbReference type="ChEBI" id="CHEBI:15377"/>
        <dbReference type="ChEBI" id="CHEBI:15378"/>
        <dbReference type="ChEBI" id="CHEBI:37565"/>
        <dbReference type="ChEBI" id="CHEBI:43474"/>
        <dbReference type="ChEBI" id="CHEBI:58189"/>
        <dbReference type="EC" id="3.6.5.3"/>
    </reaction>
    <physiologicalReaction direction="left-to-right" evidence="2">
        <dbReference type="Rhea" id="RHEA:19670"/>
    </physiologicalReaction>
</comment>
<comment type="subunit">
    <text evidence="2">Monomer.</text>
</comment>
<comment type="subcellular location">
    <subcellularLocation>
        <location evidence="2">Cytoplasm</location>
    </subcellularLocation>
</comment>
<comment type="similarity">
    <text evidence="2">Belongs to the TRAFAC class translation factor GTPase superfamily. Classic translation factor GTPase family. EF-Tu/EF-1A subfamily.</text>
</comment>
<accession>B3WE38</accession>
<reference key="1">
    <citation type="submission" date="2008-06" db="EMBL/GenBank/DDBJ databases">
        <title>Lactobacillus casei BL23 complete genome sequence.</title>
        <authorList>
            <person name="Maze A."/>
            <person name="Boel G."/>
            <person name="Bourand A."/>
            <person name="Loux V."/>
            <person name="Gibrat J.F."/>
            <person name="Zuniga M."/>
            <person name="Hartke A."/>
            <person name="Deutscher J."/>
        </authorList>
    </citation>
    <scope>NUCLEOTIDE SEQUENCE [LARGE SCALE GENOMIC DNA]</scope>
    <source>
        <strain>BL23</strain>
    </source>
</reference>
<proteinExistence type="inferred from homology"/>
<organism>
    <name type="scientific">Lacticaseibacillus casei (strain BL23)</name>
    <name type="common">Lactobacillus casei</name>
    <dbReference type="NCBI Taxonomy" id="543734"/>
    <lineage>
        <taxon>Bacteria</taxon>
        <taxon>Bacillati</taxon>
        <taxon>Bacillota</taxon>
        <taxon>Bacilli</taxon>
        <taxon>Lactobacillales</taxon>
        <taxon>Lactobacillaceae</taxon>
        <taxon>Lacticaseibacillus</taxon>
    </lineage>
</organism>
<sequence>MAEKEHYERTKPHVNIGTIGHVDHGKTTLTAAITKVLSEKGLAKAQDYASIDAAPEEKERGITINTAHVEYETEKRHYAHIDAPGHADYVKNMITGAAQMDGAILVVAATDGPMPQTREHILLARQVGVDYIVVFLNKTDLVDDPELIDLVEMEVRELLSEYDYPGDDIPVIRGSALKALEGDPEQEKVIMELMDTIDEYIPTPVRETDKPFLMPVEDVFTITGRGTVASGRIDRGTVKIGDEVEIIGLKPDVIKSTVTGLEMFRKTLDLGEAGDNVGVLLRGVNREQVERGQVLAKPGSIQLHNKFKGEVYILTKEEGGRHTPFFSNYRPQFYFHTTDVTGVIELPDGVEMVMPGDNVTFEVDLIAPVAIEKGTKFTVREGGRTVGAGVVSEILD</sequence>
<feature type="chain" id="PRO_1000095069" description="Elongation factor Tu">
    <location>
        <begin position="1"/>
        <end position="396"/>
    </location>
</feature>
<feature type="domain" description="tr-type G">
    <location>
        <begin position="11"/>
        <end position="205"/>
    </location>
</feature>
<feature type="region of interest" description="G1" evidence="1">
    <location>
        <begin position="20"/>
        <end position="27"/>
    </location>
</feature>
<feature type="region of interest" description="G2" evidence="1">
    <location>
        <begin position="61"/>
        <end position="65"/>
    </location>
</feature>
<feature type="region of interest" description="G3" evidence="1">
    <location>
        <begin position="82"/>
        <end position="85"/>
    </location>
</feature>
<feature type="region of interest" description="G4" evidence="1">
    <location>
        <begin position="137"/>
        <end position="140"/>
    </location>
</feature>
<feature type="region of interest" description="G5" evidence="1">
    <location>
        <begin position="175"/>
        <end position="177"/>
    </location>
</feature>
<feature type="binding site" evidence="2">
    <location>
        <begin position="20"/>
        <end position="27"/>
    </location>
    <ligand>
        <name>GTP</name>
        <dbReference type="ChEBI" id="CHEBI:37565"/>
    </ligand>
</feature>
<feature type="binding site" evidence="2">
    <location>
        <position position="27"/>
    </location>
    <ligand>
        <name>Mg(2+)</name>
        <dbReference type="ChEBI" id="CHEBI:18420"/>
    </ligand>
</feature>
<feature type="binding site" evidence="2">
    <location>
        <begin position="82"/>
        <end position="86"/>
    </location>
    <ligand>
        <name>GTP</name>
        <dbReference type="ChEBI" id="CHEBI:37565"/>
    </ligand>
</feature>
<feature type="binding site" evidence="2">
    <location>
        <begin position="137"/>
        <end position="140"/>
    </location>
    <ligand>
        <name>GTP</name>
        <dbReference type="ChEBI" id="CHEBI:37565"/>
    </ligand>
</feature>
<dbReference type="EC" id="3.6.5.3" evidence="2"/>
<dbReference type="EMBL" id="FM177140">
    <property type="protein sequence ID" value="CAQ66639.1"/>
    <property type="molecule type" value="Genomic_DNA"/>
</dbReference>
<dbReference type="SMR" id="B3WE38"/>
<dbReference type="KEGG" id="lcb:LCABL_15580"/>
<dbReference type="HOGENOM" id="CLU_007265_0_1_9"/>
<dbReference type="GO" id="GO:0005829">
    <property type="term" value="C:cytosol"/>
    <property type="evidence" value="ECO:0007669"/>
    <property type="project" value="TreeGrafter"/>
</dbReference>
<dbReference type="GO" id="GO:0005525">
    <property type="term" value="F:GTP binding"/>
    <property type="evidence" value="ECO:0007669"/>
    <property type="project" value="UniProtKB-UniRule"/>
</dbReference>
<dbReference type="GO" id="GO:0003924">
    <property type="term" value="F:GTPase activity"/>
    <property type="evidence" value="ECO:0007669"/>
    <property type="project" value="InterPro"/>
</dbReference>
<dbReference type="GO" id="GO:0003746">
    <property type="term" value="F:translation elongation factor activity"/>
    <property type="evidence" value="ECO:0007669"/>
    <property type="project" value="UniProtKB-UniRule"/>
</dbReference>
<dbReference type="CDD" id="cd01884">
    <property type="entry name" value="EF_Tu"/>
    <property type="match status" value="1"/>
</dbReference>
<dbReference type="CDD" id="cd03697">
    <property type="entry name" value="EFTU_II"/>
    <property type="match status" value="1"/>
</dbReference>
<dbReference type="CDD" id="cd03707">
    <property type="entry name" value="EFTU_III"/>
    <property type="match status" value="1"/>
</dbReference>
<dbReference type="FunFam" id="2.40.30.10:FF:000001">
    <property type="entry name" value="Elongation factor Tu"/>
    <property type="match status" value="1"/>
</dbReference>
<dbReference type="FunFam" id="3.40.50.300:FF:000003">
    <property type="entry name" value="Elongation factor Tu"/>
    <property type="match status" value="1"/>
</dbReference>
<dbReference type="Gene3D" id="3.40.50.300">
    <property type="entry name" value="P-loop containing nucleotide triphosphate hydrolases"/>
    <property type="match status" value="1"/>
</dbReference>
<dbReference type="Gene3D" id="2.40.30.10">
    <property type="entry name" value="Translation factors"/>
    <property type="match status" value="2"/>
</dbReference>
<dbReference type="HAMAP" id="MF_00118_B">
    <property type="entry name" value="EF_Tu_B"/>
    <property type="match status" value="1"/>
</dbReference>
<dbReference type="InterPro" id="IPR041709">
    <property type="entry name" value="EF-Tu_GTP-bd"/>
</dbReference>
<dbReference type="InterPro" id="IPR050055">
    <property type="entry name" value="EF-Tu_GTPase"/>
</dbReference>
<dbReference type="InterPro" id="IPR004161">
    <property type="entry name" value="EFTu-like_2"/>
</dbReference>
<dbReference type="InterPro" id="IPR033720">
    <property type="entry name" value="EFTU_2"/>
</dbReference>
<dbReference type="InterPro" id="IPR031157">
    <property type="entry name" value="G_TR_CS"/>
</dbReference>
<dbReference type="InterPro" id="IPR027417">
    <property type="entry name" value="P-loop_NTPase"/>
</dbReference>
<dbReference type="InterPro" id="IPR005225">
    <property type="entry name" value="Small_GTP-bd"/>
</dbReference>
<dbReference type="InterPro" id="IPR000795">
    <property type="entry name" value="T_Tr_GTP-bd_dom"/>
</dbReference>
<dbReference type="InterPro" id="IPR009000">
    <property type="entry name" value="Transl_B-barrel_sf"/>
</dbReference>
<dbReference type="InterPro" id="IPR009001">
    <property type="entry name" value="Transl_elong_EF1A/Init_IF2_C"/>
</dbReference>
<dbReference type="InterPro" id="IPR004541">
    <property type="entry name" value="Transl_elong_EFTu/EF1A_bac/org"/>
</dbReference>
<dbReference type="InterPro" id="IPR004160">
    <property type="entry name" value="Transl_elong_EFTu/EF1A_C"/>
</dbReference>
<dbReference type="NCBIfam" id="TIGR00485">
    <property type="entry name" value="EF-Tu"/>
    <property type="match status" value="1"/>
</dbReference>
<dbReference type="NCBIfam" id="NF000766">
    <property type="entry name" value="PRK00049.1"/>
    <property type="match status" value="1"/>
</dbReference>
<dbReference type="NCBIfam" id="NF009372">
    <property type="entry name" value="PRK12735.1"/>
    <property type="match status" value="1"/>
</dbReference>
<dbReference type="NCBIfam" id="NF009373">
    <property type="entry name" value="PRK12736.1"/>
    <property type="match status" value="1"/>
</dbReference>
<dbReference type="NCBIfam" id="TIGR00231">
    <property type="entry name" value="small_GTP"/>
    <property type="match status" value="1"/>
</dbReference>
<dbReference type="PANTHER" id="PTHR43721:SF22">
    <property type="entry name" value="ELONGATION FACTOR TU, MITOCHONDRIAL"/>
    <property type="match status" value="1"/>
</dbReference>
<dbReference type="PANTHER" id="PTHR43721">
    <property type="entry name" value="ELONGATION FACTOR TU-RELATED"/>
    <property type="match status" value="1"/>
</dbReference>
<dbReference type="Pfam" id="PF00009">
    <property type="entry name" value="GTP_EFTU"/>
    <property type="match status" value="1"/>
</dbReference>
<dbReference type="Pfam" id="PF03144">
    <property type="entry name" value="GTP_EFTU_D2"/>
    <property type="match status" value="1"/>
</dbReference>
<dbReference type="Pfam" id="PF03143">
    <property type="entry name" value="GTP_EFTU_D3"/>
    <property type="match status" value="1"/>
</dbReference>
<dbReference type="PRINTS" id="PR00315">
    <property type="entry name" value="ELONGATNFCT"/>
</dbReference>
<dbReference type="SUPFAM" id="SSF50465">
    <property type="entry name" value="EF-Tu/eEF-1alpha/eIF2-gamma C-terminal domain"/>
    <property type="match status" value="1"/>
</dbReference>
<dbReference type="SUPFAM" id="SSF52540">
    <property type="entry name" value="P-loop containing nucleoside triphosphate hydrolases"/>
    <property type="match status" value="1"/>
</dbReference>
<dbReference type="SUPFAM" id="SSF50447">
    <property type="entry name" value="Translation proteins"/>
    <property type="match status" value="1"/>
</dbReference>
<dbReference type="PROSITE" id="PS00301">
    <property type="entry name" value="G_TR_1"/>
    <property type="match status" value="1"/>
</dbReference>
<dbReference type="PROSITE" id="PS51722">
    <property type="entry name" value="G_TR_2"/>
    <property type="match status" value="1"/>
</dbReference>
<evidence type="ECO:0000250" key="1"/>
<evidence type="ECO:0000255" key="2">
    <source>
        <dbReference type="HAMAP-Rule" id="MF_00118"/>
    </source>
</evidence>
<protein>
    <recommendedName>
        <fullName evidence="2">Elongation factor Tu</fullName>
        <shortName evidence="2">EF-Tu</shortName>
        <ecNumber evidence="2">3.6.5.3</ecNumber>
    </recommendedName>
</protein>
<gene>
    <name evidence="2" type="primary">tuf</name>
    <name type="ordered locus">LCABL_15580</name>
</gene>
<name>EFTU_LACCB</name>